<gene>
    <name evidence="1" type="primary">rhaB</name>
    <name type="ordered locus">SeSA_A4261</name>
</gene>
<dbReference type="EC" id="2.7.1.5" evidence="1"/>
<dbReference type="EMBL" id="CP001127">
    <property type="protein sequence ID" value="ACF91905.1"/>
    <property type="molecule type" value="Genomic_DNA"/>
</dbReference>
<dbReference type="RefSeq" id="WP_000143973.1">
    <property type="nucleotide sequence ID" value="NC_011094.1"/>
</dbReference>
<dbReference type="SMR" id="B4TPQ8"/>
<dbReference type="KEGG" id="sew:SeSA_A4261"/>
<dbReference type="HOGENOM" id="CLU_039395_0_0_6"/>
<dbReference type="UniPathway" id="UPA00541">
    <property type="reaction ID" value="UER00602"/>
</dbReference>
<dbReference type="Proteomes" id="UP000001865">
    <property type="component" value="Chromosome"/>
</dbReference>
<dbReference type="GO" id="GO:0005829">
    <property type="term" value="C:cytosol"/>
    <property type="evidence" value="ECO:0007669"/>
    <property type="project" value="TreeGrafter"/>
</dbReference>
<dbReference type="GO" id="GO:0005524">
    <property type="term" value="F:ATP binding"/>
    <property type="evidence" value="ECO:0007669"/>
    <property type="project" value="UniProtKB-KW"/>
</dbReference>
<dbReference type="GO" id="GO:0004370">
    <property type="term" value="F:glycerol kinase activity"/>
    <property type="evidence" value="ECO:0007669"/>
    <property type="project" value="TreeGrafter"/>
</dbReference>
<dbReference type="GO" id="GO:0008993">
    <property type="term" value="F:rhamnulokinase activity"/>
    <property type="evidence" value="ECO:0007669"/>
    <property type="project" value="UniProtKB-UniRule"/>
</dbReference>
<dbReference type="GO" id="GO:0006071">
    <property type="term" value="P:glycerol metabolic process"/>
    <property type="evidence" value="ECO:0007669"/>
    <property type="project" value="TreeGrafter"/>
</dbReference>
<dbReference type="GO" id="GO:0019301">
    <property type="term" value="P:rhamnose catabolic process"/>
    <property type="evidence" value="ECO:0007669"/>
    <property type="project" value="UniProtKB-UniRule"/>
</dbReference>
<dbReference type="CDD" id="cd07771">
    <property type="entry name" value="ASKHA_NBD_FGGY_RhaB-like"/>
    <property type="match status" value="1"/>
</dbReference>
<dbReference type="FunFam" id="3.30.420.40:FF:000064">
    <property type="entry name" value="Rhamnulokinase"/>
    <property type="match status" value="1"/>
</dbReference>
<dbReference type="FunFam" id="3.30.420.40:FF:000073">
    <property type="entry name" value="Rhamnulokinase"/>
    <property type="match status" value="1"/>
</dbReference>
<dbReference type="Gene3D" id="3.30.420.40">
    <property type="match status" value="2"/>
</dbReference>
<dbReference type="HAMAP" id="MF_01535">
    <property type="entry name" value="Rhamnulokinase"/>
    <property type="match status" value="1"/>
</dbReference>
<dbReference type="InterPro" id="IPR043129">
    <property type="entry name" value="ATPase_NBD"/>
</dbReference>
<dbReference type="InterPro" id="IPR018485">
    <property type="entry name" value="FGGY_C"/>
</dbReference>
<dbReference type="InterPro" id="IPR018484">
    <property type="entry name" value="FGGY_N"/>
</dbReference>
<dbReference type="InterPro" id="IPR013449">
    <property type="entry name" value="Rhamnulokinase"/>
</dbReference>
<dbReference type="NCBIfam" id="NF007925">
    <property type="entry name" value="PRK10640.1"/>
    <property type="match status" value="1"/>
</dbReference>
<dbReference type="NCBIfam" id="TIGR02627">
    <property type="entry name" value="rhamnulo_kin"/>
    <property type="match status" value="1"/>
</dbReference>
<dbReference type="PANTHER" id="PTHR10196:SF93">
    <property type="entry name" value="L-RHAMNULOKINASE"/>
    <property type="match status" value="1"/>
</dbReference>
<dbReference type="PANTHER" id="PTHR10196">
    <property type="entry name" value="SUGAR KINASE"/>
    <property type="match status" value="1"/>
</dbReference>
<dbReference type="Pfam" id="PF02782">
    <property type="entry name" value="FGGY_C"/>
    <property type="match status" value="1"/>
</dbReference>
<dbReference type="Pfam" id="PF00370">
    <property type="entry name" value="FGGY_N"/>
    <property type="match status" value="1"/>
</dbReference>
<dbReference type="SUPFAM" id="SSF53067">
    <property type="entry name" value="Actin-like ATPase domain"/>
    <property type="match status" value="2"/>
</dbReference>
<accession>B4TPQ8</accession>
<protein>
    <recommendedName>
        <fullName evidence="1">Rhamnulokinase</fullName>
        <shortName evidence="1">RhaB</shortName>
        <ecNumber evidence="1">2.7.1.5</ecNumber>
    </recommendedName>
    <alternativeName>
        <fullName evidence="1">ATP:L-rhamnulose phosphotransferase</fullName>
    </alternativeName>
    <alternativeName>
        <fullName evidence="1">L-rhamnulose 1-kinase</fullName>
    </alternativeName>
    <alternativeName>
        <fullName evidence="1">Rhamnulose kinase</fullName>
    </alternativeName>
</protein>
<sequence length="489" mass="54507">MTFRHCVAVDLGASSGRVMLARYDSKHRTLTLREIHRFVNCLQKTDGFDTWDIDSLEKDIRLGLKKVCNEGILIDSIGIDTWGVDYVLLDKQGQRVGLPVSYRDNRTTGIMSQALVQIGKSEIYRRSGIQFLPFNTIYQLRALTKQQPELTAQVAHALLMPDYFSYRLTGEMNWEYTNATTTQLVNINTDDWDDTLLAWTGAKKGWFGRPSHPGNVIGDWICPQGNRIPVVAVASHDTASAVIASPLANKHSAYLSSGTWSLMGFESKMPYTTDEALAANITNEGGAEGRYRVLKNIMGLWLLQRVLKERRITDLPALIAQTEALPACRFLINPNDDRFINPDDMRAEIQAACRETDQPVPVSDAELARCIFDSLALLYADILHELANLRGEKFTQLHIVGGGCQNALLNQLCADACGIRVMAGPVEASTLGNIGIQLMTLDELNNVDDFRQVVSANYDLTTYIPNPDSEIARHVAQFQPKRQTKELCA</sequence>
<feature type="chain" id="PRO_1000146555" description="Rhamnulokinase">
    <location>
        <begin position="1"/>
        <end position="489"/>
    </location>
</feature>
<feature type="active site" description="Proton acceptor" evidence="1">
    <location>
        <position position="237"/>
    </location>
</feature>
<feature type="binding site" evidence="1">
    <location>
        <begin position="13"/>
        <end position="17"/>
    </location>
    <ligand>
        <name>ATP</name>
        <dbReference type="ChEBI" id="CHEBI:30616"/>
    </ligand>
</feature>
<feature type="binding site" evidence="1">
    <location>
        <position position="83"/>
    </location>
    <ligand>
        <name>substrate</name>
    </ligand>
</feature>
<feature type="binding site" evidence="1">
    <location>
        <begin position="236"/>
        <end position="238"/>
    </location>
    <ligand>
        <name>substrate</name>
    </ligand>
</feature>
<feature type="binding site" evidence="1">
    <location>
        <position position="259"/>
    </location>
    <ligand>
        <name>ATP</name>
        <dbReference type="ChEBI" id="CHEBI:30616"/>
    </ligand>
</feature>
<feature type="binding site" evidence="1">
    <location>
        <position position="296"/>
    </location>
    <ligand>
        <name>substrate</name>
    </ligand>
</feature>
<feature type="binding site" evidence="1">
    <location>
        <position position="304"/>
    </location>
    <ligand>
        <name>ATP</name>
        <dbReference type="ChEBI" id="CHEBI:30616"/>
    </ligand>
</feature>
<feature type="binding site" evidence="1">
    <location>
        <position position="402"/>
    </location>
    <ligand>
        <name>ATP</name>
        <dbReference type="ChEBI" id="CHEBI:30616"/>
    </ligand>
</feature>
<feature type="disulfide bond" evidence="1">
    <location>
        <begin position="68"/>
        <end position="222"/>
    </location>
</feature>
<feature type="disulfide bond" evidence="1">
    <location>
        <begin position="353"/>
        <end position="370"/>
    </location>
</feature>
<feature type="disulfide bond" evidence="1">
    <location>
        <begin position="413"/>
        <end position="417"/>
    </location>
</feature>
<name>RHAB_SALSV</name>
<evidence type="ECO:0000255" key="1">
    <source>
        <dbReference type="HAMAP-Rule" id="MF_01535"/>
    </source>
</evidence>
<proteinExistence type="inferred from homology"/>
<organism>
    <name type="scientific">Salmonella schwarzengrund (strain CVM19633)</name>
    <dbReference type="NCBI Taxonomy" id="439843"/>
    <lineage>
        <taxon>Bacteria</taxon>
        <taxon>Pseudomonadati</taxon>
        <taxon>Pseudomonadota</taxon>
        <taxon>Gammaproteobacteria</taxon>
        <taxon>Enterobacterales</taxon>
        <taxon>Enterobacteriaceae</taxon>
        <taxon>Salmonella</taxon>
    </lineage>
</organism>
<keyword id="KW-0067">ATP-binding</keyword>
<keyword id="KW-1015">Disulfide bond</keyword>
<keyword id="KW-0418">Kinase</keyword>
<keyword id="KW-0460">Magnesium</keyword>
<keyword id="KW-0547">Nucleotide-binding</keyword>
<keyword id="KW-0684">Rhamnose metabolism</keyword>
<keyword id="KW-0808">Transferase</keyword>
<comment type="function">
    <text evidence="1">Involved in the catabolism of L-rhamnose (6-deoxy-L-mannose). Catalyzes the transfer of the gamma-phosphate group from ATP to the 1-hydroxyl group of L-rhamnulose to yield L-rhamnulose 1-phosphate.</text>
</comment>
<comment type="catalytic activity">
    <reaction evidence="1">
        <text>L-rhamnulose + ATP = L-rhamnulose 1-phosphate + ADP + H(+)</text>
        <dbReference type="Rhea" id="RHEA:20117"/>
        <dbReference type="ChEBI" id="CHEBI:15378"/>
        <dbReference type="ChEBI" id="CHEBI:17897"/>
        <dbReference type="ChEBI" id="CHEBI:30616"/>
        <dbReference type="ChEBI" id="CHEBI:58313"/>
        <dbReference type="ChEBI" id="CHEBI:456216"/>
        <dbReference type="EC" id="2.7.1.5"/>
    </reaction>
</comment>
<comment type="cofactor">
    <cofactor evidence="1">
        <name>Mg(2+)</name>
        <dbReference type="ChEBI" id="CHEBI:18420"/>
    </cofactor>
</comment>
<comment type="pathway">
    <text evidence="1">Carbohydrate degradation; L-rhamnose degradation; glycerone phosphate from L-rhamnose: step 2/3.</text>
</comment>
<comment type="similarity">
    <text evidence="1">Belongs to the rhamnulokinase family.</text>
</comment>
<reference key="1">
    <citation type="journal article" date="2011" name="J. Bacteriol.">
        <title>Comparative genomics of 28 Salmonella enterica isolates: evidence for CRISPR-mediated adaptive sublineage evolution.</title>
        <authorList>
            <person name="Fricke W.F."/>
            <person name="Mammel M.K."/>
            <person name="McDermott P.F."/>
            <person name="Tartera C."/>
            <person name="White D.G."/>
            <person name="Leclerc J.E."/>
            <person name="Ravel J."/>
            <person name="Cebula T.A."/>
        </authorList>
    </citation>
    <scope>NUCLEOTIDE SEQUENCE [LARGE SCALE GENOMIC DNA]</scope>
    <source>
        <strain>CVM19633</strain>
    </source>
</reference>